<proteinExistence type="inferred from homology"/>
<protein>
    <recommendedName>
        <fullName evidence="1">NADH-quinone oxidoreductase subunit I</fullName>
        <ecNumber evidence="1">7.1.1.-</ecNumber>
    </recommendedName>
    <alternativeName>
        <fullName evidence="1">NADH dehydrogenase I subunit I</fullName>
    </alternativeName>
    <alternativeName>
        <fullName evidence="1">NDH-1 subunit I</fullName>
    </alternativeName>
</protein>
<gene>
    <name evidence="1" type="primary">nuoI</name>
    <name type="ordered locus">Bcenmc03_2265</name>
</gene>
<evidence type="ECO:0000255" key="1">
    <source>
        <dbReference type="HAMAP-Rule" id="MF_01351"/>
    </source>
</evidence>
<reference key="1">
    <citation type="submission" date="2008-02" db="EMBL/GenBank/DDBJ databases">
        <title>Complete sequence of chromosome 1 of Burkholderia cenocepacia MC0-3.</title>
        <authorList>
            <person name="Copeland A."/>
            <person name="Lucas S."/>
            <person name="Lapidus A."/>
            <person name="Barry K."/>
            <person name="Bruce D."/>
            <person name="Goodwin L."/>
            <person name="Glavina del Rio T."/>
            <person name="Dalin E."/>
            <person name="Tice H."/>
            <person name="Pitluck S."/>
            <person name="Chain P."/>
            <person name="Malfatti S."/>
            <person name="Shin M."/>
            <person name="Vergez L."/>
            <person name="Schmutz J."/>
            <person name="Larimer F."/>
            <person name="Land M."/>
            <person name="Hauser L."/>
            <person name="Kyrpides N."/>
            <person name="Mikhailova N."/>
            <person name="Tiedje J."/>
            <person name="Richardson P."/>
        </authorList>
    </citation>
    <scope>NUCLEOTIDE SEQUENCE [LARGE SCALE GENOMIC DNA]</scope>
    <source>
        <strain>MC0-3</strain>
    </source>
</reference>
<accession>B1JVN3</accession>
<keyword id="KW-0004">4Fe-4S</keyword>
<keyword id="KW-0997">Cell inner membrane</keyword>
<keyword id="KW-1003">Cell membrane</keyword>
<keyword id="KW-0408">Iron</keyword>
<keyword id="KW-0411">Iron-sulfur</keyword>
<keyword id="KW-0472">Membrane</keyword>
<keyword id="KW-0479">Metal-binding</keyword>
<keyword id="KW-0520">NAD</keyword>
<keyword id="KW-0874">Quinone</keyword>
<keyword id="KW-0677">Repeat</keyword>
<keyword id="KW-1278">Translocase</keyword>
<keyword id="KW-0830">Ubiquinone</keyword>
<organism>
    <name type="scientific">Burkholderia orbicola (strain MC0-3)</name>
    <dbReference type="NCBI Taxonomy" id="406425"/>
    <lineage>
        <taxon>Bacteria</taxon>
        <taxon>Pseudomonadati</taxon>
        <taxon>Pseudomonadota</taxon>
        <taxon>Betaproteobacteria</taxon>
        <taxon>Burkholderiales</taxon>
        <taxon>Burkholderiaceae</taxon>
        <taxon>Burkholderia</taxon>
        <taxon>Burkholderia cepacia complex</taxon>
        <taxon>Burkholderia orbicola</taxon>
    </lineage>
</organism>
<dbReference type="EC" id="7.1.1.-" evidence="1"/>
<dbReference type="EMBL" id="CP000958">
    <property type="protein sequence ID" value="ACA91426.1"/>
    <property type="molecule type" value="Genomic_DNA"/>
</dbReference>
<dbReference type="RefSeq" id="WP_006478270.1">
    <property type="nucleotide sequence ID" value="NC_010508.1"/>
</dbReference>
<dbReference type="SMR" id="B1JVN3"/>
<dbReference type="GeneID" id="93128467"/>
<dbReference type="KEGG" id="bcm:Bcenmc03_2265"/>
<dbReference type="HOGENOM" id="CLU_067218_5_1_4"/>
<dbReference type="Proteomes" id="UP000002169">
    <property type="component" value="Chromosome 1"/>
</dbReference>
<dbReference type="GO" id="GO:0005886">
    <property type="term" value="C:plasma membrane"/>
    <property type="evidence" value="ECO:0007669"/>
    <property type="project" value="UniProtKB-SubCell"/>
</dbReference>
<dbReference type="GO" id="GO:0051539">
    <property type="term" value="F:4 iron, 4 sulfur cluster binding"/>
    <property type="evidence" value="ECO:0007669"/>
    <property type="project" value="UniProtKB-KW"/>
</dbReference>
<dbReference type="GO" id="GO:0005506">
    <property type="term" value="F:iron ion binding"/>
    <property type="evidence" value="ECO:0007669"/>
    <property type="project" value="UniProtKB-UniRule"/>
</dbReference>
<dbReference type="GO" id="GO:0050136">
    <property type="term" value="F:NADH:ubiquinone reductase (non-electrogenic) activity"/>
    <property type="evidence" value="ECO:0007669"/>
    <property type="project" value="UniProtKB-UniRule"/>
</dbReference>
<dbReference type="GO" id="GO:0048038">
    <property type="term" value="F:quinone binding"/>
    <property type="evidence" value="ECO:0007669"/>
    <property type="project" value="UniProtKB-KW"/>
</dbReference>
<dbReference type="GO" id="GO:0009060">
    <property type="term" value="P:aerobic respiration"/>
    <property type="evidence" value="ECO:0007669"/>
    <property type="project" value="TreeGrafter"/>
</dbReference>
<dbReference type="FunFam" id="3.30.70.3270:FF:000003">
    <property type="entry name" value="NADH-quinone oxidoreductase subunit I"/>
    <property type="match status" value="1"/>
</dbReference>
<dbReference type="Gene3D" id="3.30.70.3270">
    <property type="match status" value="1"/>
</dbReference>
<dbReference type="HAMAP" id="MF_01351">
    <property type="entry name" value="NDH1_NuoI"/>
    <property type="match status" value="1"/>
</dbReference>
<dbReference type="InterPro" id="IPR017896">
    <property type="entry name" value="4Fe4S_Fe-S-bd"/>
</dbReference>
<dbReference type="InterPro" id="IPR017900">
    <property type="entry name" value="4Fe4S_Fe_S_CS"/>
</dbReference>
<dbReference type="InterPro" id="IPR010226">
    <property type="entry name" value="NADH_quinone_OxRdtase_chainI"/>
</dbReference>
<dbReference type="NCBIfam" id="TIGR01971">
    <property type="entry name" value="NuoI"/>
    <property type="match status" value="1"/>
</dbReference>
<dbReference type="NCBIfam" id="NF004538">
    <property type="entry name" value="PRK05888.1-4"/>
    <property type="match status" value="1"/>
</dbReference>
<dbReference type="NCBIfam" id="NF004539">
    <property type="entry name" value="PRK05888.1-5"/>
    <property type="match status" value="1"/>
</dbReference>
<dbReference type="PANTHER" id="PTHR10849:SF20">
    <property type="entry name" value="NADH DEHYDROGENASE [UBIQUINONE] IRON-SULFUR PROTEIN 8, MITOCHONDRIAL"/>
    <property type="match status" value="1"/>
</dbReference>
<dbReference type="PANTHER" id="PTHR10849">
    <property type="entry name" value="NADH DEHYDROGENASE UBIQUINONE IRON-SULFUR PROTEIN 8, MITOCHONDRIAL"/>
    <property type="match status" value="1"/>
</dbReference>
<dbReference type="Pfam" id="PF12838">
    <property type="entry name" value="Fer4_7"/>
    <property type="match status" value="1"/>
</dbReference>
<dbReference type="SUPFAM" id="SSF54862">
    <property type="entry name" value="4Fe-4S ferredoxins"/>
    <property type="match status" value="1"/>
</dbReference>
<dbReference type="PROSITE" id="PS00198">
    <property type="entry name" value="4FE4S_FER_1"/>
    <property type="match status" value="2"/>
</dbReference>
<dbReference type="PROSITE" id="PS51379">
    <property type="entry name" value="4FE4S_FER_2"/>
    <property type="match status" value="2"/>
</dbReference>
<sequence>MTAIQHFFKTFFLTELLKGLALTGRYTFKRKFTVQFPEEKTPISPRFRGLHALRRYENGEERCIACKLCEAVCPALAITIESETRADNTRRTTRYDIDLTKCIFCGFCEESCPVDSIVETQILEYHGEKRGDLYFTKEMLLAVGDRYEKDIAAAKAADAPYR</sequence>
<name>NUOI_BURO0</name>
<feature type="chain" id="PRO_1000143635" description="NADH-quinone oxidoreductase subunit I">
    <location>
        <begin position="1"/>
        <end position="162"/>
    </location>
</feature>
<feature type="domain" description="4Fe-4S ferredoxin-type 1" evidence="1">
    <location>
        <begin position="54"/>
        <end position="83"/>
    </location>
</feature>
<feature type="domain" description="4Fe-4S ferredoxin-type 2" evidence="1">
    <location>
        <begin position="93"/>
        <end position="122"/>
    </location>
</feature>
<feature type="binding site" evidence="1">
    <location>
        <position position="63"/>
    </location>
    <ligand>
        <name>[4Fe-4S] cluster</name>
        <dbReference type="ChEBI" id="CHEBI:49883"/>
        <label>1</label>
    </ligand>
</feature>
<feature type="binding site" evidence="1">
    <location>
        <position position="66"/>
    </location>
    <ligand>
        <name>[4Fe-4S] cluster</name>
        <dbReference type="ChEBI" id="CHEBI:49883"/>
        <label>1</label>
    </ligand>
</feature>
<feature type="binding site" evidence="1">
    <location>
        <position position="69"/>
    </location>
    <ligand>
        <name>[4Fe-4S] cluster</name>
        <dbReference type="ChEBI" id="CHEBI:49883"/>
        <label>1</label>
    </ligand>
</feature>
<feature type="binding site" evidence="1">
    <location>
        <position position="73"/>
    </location>
    <ligand>
        <name>[4Fe-4S] cluster</name>
        <dbReference type="ChEBI" id="CHEBI:49883"/>
        <label>2</label>
    </ligand>
</feature>
<feature type="binding site" evidence="1">
    <location>
        <position position="102"/>
    </location>
    <ligand>
        <name>[4Fe-4S] cluster</name>
        <dbReference type="ChEBI" id="CHEBI:49883"/>
        <label>2</label>
    </ligand>
</feature>
<feature type="binding site" evidence="1">
    <location>
        <position position="105"/>
    </location>
    <ligand>
        <name>[4Fe-4S] cluster</name>
        <dbReference type="ChEBI" id="CHEBI:49883"/>
        <label>2</label>
    </ligand>
</feature>
<feature type="binding site" evidence="1">
    <location>
        <position position="108"/>
    </location>
    <ligand>
        <name>[4Fe-4S] cluster</name>
        <dbReference type="ChEBI" id="CHEBI:49883"/>
        <label>2</label>
    </ligand>
</feature>
<feature type="binding site" evidence="1">
    <location>
        <position position="112"/>
    </location>
    <ligand>
        <name>[4Fe-4S] cluster</name>
        <dbReference type="ChEBI" id="CHEBI:49883"/>
        <label>1</label>
    </ligand>
</feature>
<comment type="function">
    <text evidence="1">NDH-1 shuttles electrons from NADH, via FMN and iron-sulfur (Fe-S) centers, to quinones in the respiratory chain. The immediate electron acceptor for the enzyme in this species is believed to be ubiquinone. Couples the redox reaction to proton translocation (for every two electrons transferred, four hydrogen ions are translocated across the cytoplasmic membrane), and thus conserves the redox energy in a proton gradient.</text>
</comment>
<comment type="catalytic activity">
    <reaction evidence="1">
        <text>a quinone + NADH + 5 H(+)(in) = a quinol + NAD(+) + 4 H(+)(out)</text>
        <dbReference type="Rhea" id="RHEA:57888"/>
        <dbReference type="ChEBI" id="CHEBI:15378"/>
        <dbReference type="ChEBI" id="CHEBI:24646"/>
        <dbReference type="ChEBI" id="CHEBI:57540"/>
        <dbReference type="ChEBI" id="CHEBI:57945"/>
        <dbReference type="ChEBI" id="CHEBI:132124"/>
    </reaction>
</comment>
<comment type="cofactor">
    <cofactor evidence="1">
        <name>[4Fe-4S] cluster</name>
        <dbReference type="ChEBI" id="CHEBI:49883"/>
    </cofactor>
    <text evidence="1">Binds 2 [4Fe-4S] clusters per subunit.</text>
</comment>
<comment type="subunit">
    <text evidence="1">NDH-1 is composed of 14 different subunits. Subunits NuoA, H, J, K, L, M, N constitute the membrane sector of the complex.</text>
</comment>
<comment type="subcellular location">
    <subcellularLocation>
        <location evidence="1">Cell inner membrane</location>
        <topology evidence="1">Peripheral membrane protein</topology>
    </subcellularLocation>
</comment>
<comment type="similarity">
    <text evidence="1">Belongs to the complex I 23 kDa subunit family.</text>
</comment>